<feature type="chain" id="PRO_1000088448" description="Adaptive-response sensory kinase SasA">
    <location>
        <begin position="1"/>
        <end position="383"/>
    </location>
</feature>
<feature type="domain" description="Histidine kinase" evidence="1">
    <location>
        <begin position="152"/>
        <end position="365"/>
    </location>
</feature>
<feature type="modified residue" description="Phosphohistidine; by autocatalysis" evidence="1">
    <location>
        <position position="155"/>
    </location>
</feature>
<reference key="1">
    <citation type="journal article" date="2006" name="Proc. Natl. Acad. Sci. U.S.A.">
        <title>Genome sequence of Synechococcus CC9311: insights into adaptation to a coastal environment.</title>
        <authorList>
            <person name="Palenik B."/>
            <person name="Ren Q."/>
            <person name="Dupont C.L."/>
            <person name="Myers G.S."/>
            <person name="Heidelberg J.F."/>
            <person name="Badger J.H."/>
            <person name="Madupu R."/>
            <person name="Nelson W.C."/>
            <person name="Brinkac L.M."/>
            <person name="Dodson R.J."/>
            <person name="Durkin A.S."/>
            <person name="Daugherty S.C."/>
            <person name="Sullivan S.A."/>
            <person name="Khouri H."/>
            <person name="Mohamoud Y."/>
            <person name="Halpin R."/>
            <person name="Paulsen I.T."/>
        </authorList>
    </citation>
    <scope>NUCLEOTIDE SEQUENCE [LARGE SCALE GENOMIC DNA]</scope>
    <source>
        <strain>CC9311</strain>
    </source>
</reference>
<comment type="function">
    <text evidence="1">Member of the two-component regulatory system SasA/RpaA involved in genome-wide circadian gene expression. One of several clock output pathways. Participates in the Kai clock protein complex, the main circadian regulator in cyanobacteria, via its interaction with KaiC. KaiC enhances the autophosphorylation activity of SasA, which then transfers its phosphate group to RpaA to activate it. In addition to its output function, recruits fold-shifted KaiB (KaiB(fs)) to KaiC to cooperatively form the KaiB(6):KaiC(6) complex (independent of SasA kinase activity). Required for robustness of the circadian rhythm of gene expression and is involved in clock output, also required for adaptation to light/dark cycles.</text>
</comment>
<comment type="catalytic activity">
    <reaction evidence="1">
        <text>ATP + protein L-histidine = ADP + protein N-phospho-L-histidine.</text>
        <dbReference type="EC" id="2.7.13.3"/>
    </reaction>
</comment>
<comment type="subunit">
    <text evidence="1">Homooligomerizes. Interacts with KaiC. Participates in the KaiABC clock complex, whose core is composed of a KaiC homohexamer, 6 KaiB and up to 6 KaiA dimers. SasA and KaiB(fs) compete to bind to KaiC.</text>
</comment>
<comment type="domain">
    <text evidence="1">The N-terminus interacts with KaiC, while the C-terminal histidine kinase domain autophosphorylates and is probably responsible for self-oligomerization. The N-terminal domain stimulates the C-terminus to autophosphorylate.</text>
</comment>
<keyword id="KW-0067">ATP-binding</keyword>
<keyword id="KW-0090">Biological rhythms</keyword>
<keyword id="KW-0418">Kinase</keyword>
<keyword id="KW-0547">Nucleotide-binding</keyword>
<keyword id="KW-0597">Phosphoprotein</keyword>
<keyword id="KW-1185">Reference proteome</keyword>
<keyword id="KW-0808">Transferase</keyword>
<keyword id="KW-0902">Two-component regulatory system</keyword>
<organism>
    <name type="scientific">Synechococcus sp. (strain CC9311)</name>
    <dbReference type="NCBI Taxonomy" id="64471"/>
    <lineage>
        <taxon>Bacteria</taxon>
        <taxon>Bacillati</taxon>
        <taxon>Cyanobacteriota</taxon>
        <taxon>Cyanophyceae</taxon>
        <taxon>Synechococcales</taxon>
        <taxon>Synechococcaceae</taxon>
        <taxon>Synechococcus</taxon>
    </lineage>
</organism>
<protein>
    <recommendedName>
        <fullName evidence="1">Adaptive-response sensory kinase SasA</fullName>
        <ecNumber evidence="1">2.7.13.3</ecNumber>
    </recommendedName>
    <alternativeName>
        <fullName evidence="1">Sensor histidine kinase SasA</fullName>
    </alternativeName>
</protein>
<sequence>MDGIDRNPRQKLSLLLVAGRHHLSSRDLRELVEFLQNEDCGFDVSLQISDPTQQPELLELHRLVVTPSLVKLQPQPKQVFAGSSIFQQLRGWLPRWQQDEVVSGLGLSLKPTELDGSRTQRELQLEDQLLVLRQENETLIDRLQAQERLLRMVAHELRTPLTAATLAVQSQELGQIDIHRFRDVLKRRLEEIALLSKDLLEVGSTRWEALFNPQRLDLTSVAAEAILELEKLWLGRDVTIHTDIPADLPKVFADQRRMRQVLLNLLENALKYTPNGGLISLTMLHRTSQWVQVSISDSGPGIPEEEQQRIFLDRVRLPQTSAGASGFGVGLSVCRRIVEVHGGRIWVISEPEKGACFTFNVPIWQGQGQEKENVVLTEGQAEP</sequence>
<proteinExistence type="inferred from homology"/>
<dbReference type="EC" id="2.7.13.3" evidence="1"/>
<dbReference type="EMBL" id="CP000435">
    <property type="protein sequence ID" value="ABI47522.1"/>
    <property type="molecule type" value="Genomic_DNA"/>
</dbReference>
<dbReference type="RefSeq" id="WP_011618940.1">
    <property type="nucleotide sequence ID" value="NC_008319.1"/>
</dbReference>
<dbReference type="SMR" id="Q0IBF4"/>
<dbReference type="STRING" id="64471.sync_1006"/>
<dbReference type="KEGG" id="syg:sync_1006"/>
<dbReference type="eggNOG" id="COG2205">
    <property type="taxonomic scope" value="Bacteria"/>
</dbReference>
<dbReference type="HOGENOM" id="CLU_723030_0_0_3"/>
<dbReference type="OrthoDB" id="9773956at2"/>
<dbReference type="Proteomes" id="UP000001961">
    <property type="component" value="Chromosome"/>
</dbReference>
<dbReference type="GO" id="GO:0005524">
    <property type="term" value="F:ATP binding"/>
    <property type="evidence" value="ECO:0007669"/>
    <property type="project" value="UniProtKB-KW"/>
</dbReference>
<dbReference type="GO" id="GO:0000155">
    <property type="term" value="F:phosphorelay sensor kinase activity"/>
    <property type="evidence" value="ECO:0007669"/>
    <property type="project" value="InterPro"/>
</dbReference>
<dbReference type="GO" id="GO:0007623">
    <property type="term" value="P:circadian rhythm"/>
    <property type="evidence" value="ECO:0007669"/>
    <property type="project" value="UniProtKB-UniRule"/>
</dbReference>
<dbReference type="CDD" id="cd00082">
    <property type="entry name" value="HisKA"/>
    <property type="match status" value="1"/>
</dbReference>
<dbReference type="CDD" id="cd02978">
    <property type="entry name" value="KaiB_like"/>
    <property type="match status" value="1"/>
</dbReference>
<dbReference type="FunFam" id="3.30.565.10:FF:000006">
    <property type="entry name" value="Sensor histidine kinase WalK"/>
    <property type="match status" value="1"/>
</dbReference>
<dbReference type="Gene3D" id="1.10.287.130">
    <property type="match status" value="1"/>
</dbReference>
<dbReference type="Gene3D" id="3.40.30.10">
    <property type="entry name" value="Glutaredoxin"/>
    <property type="match status" value="1"/>
</dbReference>
<dbReference type="Gene3D" id="3.30.565.10">
    <property type="entry name" value="Histidine kinase-like ATPase, C-terminal domain"/>
    <property type="match status" value="1"/>
</dbReference>
<dbReference type="HAMAP" id="MF_01837">
    <property type="entry name" value="Kinase_SasA"/>
    <property type="match status" value="1"/>
</dbReference>
<dbReference type="InterPro" id="IPR036890">
    <property type="entry name" value="HATPase_C_sf"/>
</dbReference>
<dbReference type="InterPro" id="IPR005467">
    <property type="entry name" value="His_kinase_dom"/>
</dbReference>
<dbReference type="InterPro" id="IPR003661">
    <property type="entry name" value="HisK_dim/P_dom"/>
</dbReference>
<dbReference type="InterPro" id="IPR036097">
    <property type="entry name" value="HisK_dim/P_sf"/>
</dbReference>
<dbReference type="InterPro" id="IPR011649">
    <property type="entry name" value="KaiB_domain"/>
</dbReference>
<dbReference type="InterPro" id="IPR023527">
    <property type="entry name" value="Kinase_SasA"/>
</dbReference>
<dbReference type="InterPro" id="IPR004358">
    <property type="entry name" value="Sig_transdc_His_kin-like_C"/>
</dbReference>
<dbReference type="InterPro" id="IPR036249">
    <property type="entry name" value="Thioredoxin-like_sf"/>
</dbReference>
<dbReference type="NCBIfam" id="NF006800">
    <property type="entry name" value="PRK09303.1"/>
    <property type="match status" value="1"/>
</dbReference>
<dbReference type="PANTHER" id="PTHR43547:SF2">
    <property type="entry name" value="HYBRID SIGNAL TRANSDUCTION HISTIDINE KINASE C"/>
    <property type="match status" value="1"/>
</dbReference>
<dbReference type="PANTHER" id="PTHR43547">
    <property type="entry name" value="TWO-COMPONENT HISTIDINE KINASE"/>
    <property type="match status" value="1"/>
</dbReference>
<dbReference type="Pfam" id="PF02518">
    <property type="entry name" value="HATPase_c"/>
    <property type="match status" value="1"/>
</dbReference>
<dbReference type="Pfam" id="PF00512">
    <property type="entry name" value="HisKA"/>
    <property type="match status" value="1"/>
</dbReference>
<dbReference type="Pfam" id="PF07689">
    <property type="entry name" value="KaiB"/>
    <property type="match status" value="1"/>
</dbReference>
<dbReference type="PRINTS" id="PR00344">
    <property type="entry name" value="BCTRLSENSOR"/>
</dbReference>
<dbReference type="SMART" id="SM00387">
    <property type="entry name" value="HATPase_c"/>
    <property type="match status" value="1"/>
</dbReference>
<dbReference type="SMART" id="SM00388">
    <property type="entry name" value="HisKA"/>
    <property type="match status" value="1"/>
</dbReference>
<dbReference type="SMART" id="SM01248">
    <property type="entry name" value="KaiB"/>
    <property type="match status" value="1"/>
</dbReference>
<dbReference type="SUPFAM" id="SSF55874">
    <property type="entry name" value="ATPase domain of HSP90 chaperone/DNA topoisomerase II/histidine kinase"/>
    <property type="match status" value="1"/>
</dbReference>
<dbReference type="SUPFAM" id="SSF47384">
    <property type="entry name" value="Homodimeric domain of signal transducing histidine kinase"/>
    <property type="match status" value="1"/>
</dbReference>
<dbReference type="SUPFAM" id="SSF52833">
    <property type="entry name" value="Thioredoxin-like"/>
    <property type="match status" value="1"/>
</dbReference>
<dbReference type="PROSITE" id="PS50109">
    <property type="entry name" value="HIS_KIN"/>
    <property type="match status" value="1"/>
</dbReference>
<gene>
    <name evidence="1" type="primary">sasA</name>
    <name type="ordered locus">sync_1006</name>
</gene>
<accession>Q0IBF4</accession>
<evidence type="ECO:0000255" key="1">
    <source>
        <dbReference type="HAMAP-Rule" id="MF_01837"/>
    </source>
</evidence>
<name>SASA_SYNS3</name>